<organism>
    <name type="scientific">Staphylococcus aureus (strain JH1)</name>
    <dbReference type="NCBI Taxonomy" id="359787"/>
    <lineage>
        <taxon>Bacteria</taxon>
        <taxon>Bacillati</taxon>
        <taxon>Bacillota</taxon>
        <taxon>Bacilli</taxon>
        <taxon>Bacillales</taxon>
        <taxon>Staphylococcaceae</taxon>
        <taxon>Staphylococcus</taxon>
    </lineage>
</organism>
<feature type="chain" id="PRO_1000076868" description="Pantothenate synthetase">
    <location>
        <begin position="1"/>
        <end position="283"/>
    </location>
</feature>
<feature type="active site" description="Proton donor" evidence="1">
    <location>
        <position position="38"/>
    </location>
</feature>
<feature type="binding site" evidence="1">
    <location>
        <begin position="31"/>
        <end position="38"/>
    </location>
    <ligand>
        <name>ATP</name>
        <dbReference type="ChEBI" id="CHEBI:30616"/>
    </ligand>
</feature>
<feature type="binding site" evidence="1">
    <location>
        <position position="62"/>
    </location>
    <ligand>
        <name>(R)-pantoate</name>
        <dbReference type="ChEBI" id="CHEBI:15980"/>
    </ligand>
</feature>
<feature type="binding site" evidence="1">
    <location>
        <position position="62"/>
    </location>
    <ligand>
        <name>beta-alanine</name>
        <dbReference type="ChEBI" id="CHEBI:57966"/>
    </ligand>
</feature>
<feature type="binding site" evidence="1">
    <location>
        <begin position="148"/>
        <end position="151"/>
    </location>
    <ligand>
        <name>ATP</name>
        <dbReference type="ChEBI" id="CHEBI:30616"/>
    </ligand>
</feature>
<feature type="binding site" evidence="1">
    <location>
        <position position="154"/>
    </location>
    <ligand>
        <name>(R)-pantoate</name>
        <dbReference type="ChEBI" id="CHEBI:15980"/>
    </ligand>
</feature>
<feature type="binding site" evidence="1">
    <location>
        <position position="177"/>
    </location>
    <ligand>
        <name>ATP</name>
        <dbReference type="ChEBI" id="CHEBI:30616"/>
    </ligand>
</feature>
<feature type="binding site" evidence="1">
    <location>
        <begin position="185"/>
        <end position="188"/>
    </location>
    <ligand>
        <name>ATP</name>
        <dbReference type="ChEBI" id="CHEBI:30616"/>
    </ligand>
</feature>
<accession>A6U4X8</accession>
<dbReference type="EC" id="6.3.2.1" evidence="1"/>
<dbReference type="EMBL" id="CP000736">
    <property type="protein sequence ID" value="ABR53496.1"/>
    <property type="molecule type" value="Genomic_DNA"/>
</dbReference>
<dbReference type="SMR" id="A6U4X8"/>
<dbReference type="KEGG" id="sah:SaurJH1_2674"/>
<dbReference type="HOGENOM" id="CLU_047148_0_0_9"/>
<dbReference type="UniPathway" id="UPA00028">
    <property type="reaction ID" value="UER00005"/>
</dbReference>
<dbReference type="GO" id="GO:0005829">
    <property type="term" value="C:cytosol"/>
    <property type="evidence" value="ECO:0007669"/>
    <property type="project" value="TreeGrafter"/>
</dbReference>
<dbReference type="GO" id="GO:0005524">
    <property type="term" value="F:ATP binding"/>
    <property type="evidence" value="ECO:0007669"/>
    <property type="project" value="UniProtKB-KW"/>
</dbReference>
<dbReference type="GO" id="GO:0004592">
    <property type="term" value="F:pantoate-beta-alanine ligase activity"/>
    <property type="evidence" value="ECO:0007669"/>
    <property type="project" value="UniProtKB-UniRule"/>
</dbReference>
<dbReference type="GO" id="GO:0015940">
    <property type="term" value="P:pantothenate biosynthetic process"/>
    <property type="evidence" value="ECO:0007669"/>
    <property type="project" value="UniProtKB-UniRule"/>
</dbReference>
<dbReference type="CDD" id="cd00560">
    <property type="entry name" value="PanC"/>
    <property type="match status" value="1"/>
</dbReference>
<dbReference type="FunFam" id="3.30.1300.10:FF:000001">
    <property type="entry name" value="Pantothenate synthetase"/>
    <property type="match status" value="1"/>
</dbReference>
<dbReference type="FunFam" id="3.40.50.620:FF:000013">
    <property type="entry name" value="Pantothenate synthetase"/>
    <property type="match status" value="1"/>
</dbReference>
<dbReference type="Gene3D" id="3.40.50.620">
    <property type="entry name" value="HUPs"/>
    <property type="match status" value="1"/>
</dbReference>
<dbReference type="Gene3D" id="3.30.1300.10">
    <property type="entry name" value="Pantoate-beta-alanine ligase, C-terminal domain"/>
    <property type="match status" value="1"/>
</dbReference>
<dbReference type="HAMAP" id="MF_00158">
    <property type="entry name" value="PanC"/>
    <property type="match status" value="1"/>
</dbReference>
<dbReference type="InterPro" id="IPR003721">
    <property type="entry name" value="Pantoate_ligase"/>
</dbReference>
<dbReference type="InterPro" id="IPR042176">
    <property type="entry name" value="Pantoate_ligase_C"/>
</dbReference>
<dbReference type="InterPro" id="IPR014729">
    <property type="entry name" value="Rossmann-like_a/b/a_fold"/>
</dbReference>
<dbReference type="NCBIfam" id="TIGR00018">
    <property type="entry name" value="panC"/>
    <property type="match status" value="1"/>
</dbReference>
<dbReference type="PANTHER" id="PTHR21299">
    <property type="entry name" value="CYTIDYLATE KINASE/PANTOATE-BETA-ALANINE LIGASE"/>
    <property type="match status" value="1"/>
</dbReference>
<dbReference type="PANTHER" id="PTHR21299:SF1">
    <property type="entry name" value="PANTOATE--BETA-ALANINE LIGASE"/>
    <property type="match status" value="1"/>
</dbReference>
<dbReference type="Pfam" id="PF02569">
    <property type="entry name" value="Pantoate_ligase"/>
    <property type="match status" value="1"/>
</dbReference>
<dbReference type="SUPFAM" id="SSF52374">
    <property type="entry name" value="Nucleotidylyl transferase"/>
    <property type="match status" value="1"/>
</dbReference>
<gene>
    <name evidence="1" type="primary">panC</name>
    <name type="ordered locus">SaurJH1_2674</name>
</gene>
<reference key="1">
    <citation type="submission" date="2007-06" db="EMBL/GenBank/DDBJ databases">
        <title>Complete sequence of chromosome of Staphylococcus aureus subsp. aureus JH1.</title>
        <authorList>
            <consortium name="US DOE Joint Genome Institute"/>
            <person name="Copeland A."/>
            <person name="Lucas S."/>
            <person name="Lapidus A."/>
            <person name="Barry K."/>
            <person name="Detter J.C."/>
            <person name="Glavina del Rio T."/>
            <person name="Hammon N."/>
            <person name="Israni S."/>
            <person name="Dalin E."/>
            <person name="Tice H."/>
            <person name="Pitluck S."/>
            <person name="Chain P."/>
            <person name="Malfatti S."/>
            <person name="Shin M."/>
            <person name="Vergez L."/>
            <person name="Schmutz J."/>
            <person name="Larimer F."/>
            <person name="Land M."/>
            <person name="Hauser L."/>
            <person name="Kyrpides N."/>
            <person name="Ivanova N."/>
            <person name="Tomasz A."/>
            <person name="Richardson P."/>
        </authorList>
    </citation>
    <scope>NUCLEOTIDE SEQUENCE [LARGE SCALE GENOMIC DNA]</scope>
    <source>
        <strain>JH1</strain>
    </source>
</reference>
<proteinExistence type="inferred from homology"/>
<sequence>MTKLITTVKEMQHIVKAAKRSGTTIGFIPTMGALHDGHLTMVRESVSTNDITVVSVFVNPLQFGPNEDFDAYPRQIDKDLELVSEVGADIVFHPAVEDIYPGELGIDVKVGPLADVLEGAKRPGHFDGVVTVVNKLFNIVMPDYAYFGKKDAQQLAIVEQMVKDFNHAVEIIGIDIVREADGLAKSSRNVYLTEQERQEAVHLSKSLLLAQALYQDGERQSKVIIDRVTEYLESHISGRIEEVAVYSYPQLVEQHEITGRIFISLAVKFSKARLIDNIIIGAE</sequence>
<evidence type="ECO:0000255" key="1">
    <source>
        <dbReference type="HAMAP-Rule" id="MF_00158"/>
    </source>
</evidence>
<keyword id="KW-0067">ATP-binding</keyword>
<keyword id="KW-0963">Cytoplasm</keyword>
<keyword id="KW-0436">Ligase</keyword>
<keyword id="KW-0547">Nucleotide-binding</keyword>
<keyword id="KW-0566">Pantothenate biosynthesis</keyword>
<name>PANC_STAA2</name>
<comment type="function">
    <text evidence="1">Catalyzes the condensation of pantoate with beta-alanine in an ATP-dependent reaction via a pantoyl-adenylate intermediate.</text>
</comment>
<comment type="catalytic activity">
    <reaction evidence="1">
        <text>(R)-pantoate + beta-alanine + ATP = (R)-pantothenate + AMP + diphosphate + H(+)</text>
        <dbReference type="Rhea" id="RHEA:10912"/>
        <dbReference type="ChEBI" id="CHEBI:15378"/>
        <dbReference type="ChEBI" id="CHEBI:15980"/>
        <dbReference type="ChEBI" id="CHEBI:29032"/>
        <dbReference type="ChEBI" id="CHEBI:30616"/>
        <dbReference type="ChEBI" id="CHEBI:33019"/>
        <dbReference type="ChEBI" id="CHEBI:57966"/>
        <dbReference type="ChEBI" id="CHEBI:456215"/>
        <dbReference type="EC" id="6.3.2.1"/>
    </reaction>
</comment>
<comment type="pathway">
    <text evidence="1">Cofactor biosynthesis; (R)-pantothenate biosynthesis; (R)-pantothenate from (R)-pantoate and beta-alanine: step 1/1.</text>
</comment>
<comment type="subunit">
    <text evidence="1">Homodimer.</text>
</comment>
<comment type="subcellular location">
    <subcellularLocation>
        <location evidence="1">Cytoplasm</location>
    </subcellularLocation>
</comment>
<comment type="miscellaneous">
    <text evidence="1">The reaction proceeds by a bi uni uni bi ping pong mechanism.</text>
</comment>
<comment type="similarity">
    <text evidence="1">Belongs to the pantothenate synthetase family.</text>
</comment>
<protein>
    <recommendedName>
        <fullName evidence="1">Pantothenate synthetase</fullName>
        <shortName evidence="1">PS</shortName>
        <ecNumber evidence="1">6.3.2.1</ecNumber>
    </recommendedName>
    <alternativeName>
        <fullName evidence="1">Pantoate--beta-alanine ligase</fullName>
    </alternativeName>
    <alternativeName>
        <fullName evidence="1">Pantoate-activating enzyme</fullName>
    </alternativeName>
</protein>